<name>RDH7_RAT</name>
<gene>
    <name evidence="4" type="primary">Rdh7</name>
    <name evidence="4" type="synonym">Rdh3</name>
</gene>
<organism>
    <name type="scientific">Rattus norvegicus</name>
    <name type="common">Rat</name>
    <dbReference type="NCBI Taxonomy" id="10116"/>
    <lineage>
        <taxon>Eukaryota</taxon>
        <taxon>Metazoa</taxon>
        <taxon>Chordata</taxon>
        <taxon>Craniata</taxon>
        <taxon>Vertebrata</taxon>
        <taxon>Euteleostomi</taxon>
        <taxon>Mammalia</taxon>
        <taxon>Eutheria</taxon>
        <taxon>Euarchontoglires</taxon>
        <taxon>Glires</taxon>
        <taxon>Rodentia</taxon>
        <taxon>Myomorpha</taxon>
        <taxon>Muroidea</taxon>
        <taxon>Muridae</taxon>
        <taxon>Murinae</taxon>
        <taxon>Rattus</taxon>
    </lineage>
</organism>
<comment type="function">
    <text>Acts on retinol bound on cellular retinol-binding protein (CRBP).</text>
</comment>
<comment type="catalytic activity">
    <reaction>
        <text>all-trans-retinol--[retinol-binding protein] + NAD(+) = all-trans-retinal--[retinol-binding protein] + NADH + H(+)</text>
        <dbReference type="Rhea" id="RHEA:48488"/>
        <dbReference type="Rhea" id="RHEA-COMP:14428"/>
        <dbReference type="Rhea" id="RHEA-COMP:14430"/>
        <dbReference type="ChEBI" id="CHEBI:15378"/>
        <dbReference type="ChEBI" id="CHEBI:17336"/>
        <dbReference type="ChEBI" id="CHEBI:17898"/>
        <dbReference type="ChEBI" id="CHEBI:57540"/>
        <dbReference type="ChEBI" id="CHEBI:57945"/>
        <dbReference type="ChEBI" id="CHEBI:83228"/>
        <dbReference type="EC" id="1.1.1.105"/>
    </reaction>
</comment>
<comment type="pathway">
    <text>Cofactor metabolism; retinol metabolism.</text>
</comment>
<comment type="subcellular location">
    <subcellularLocation>
        <location>Microsome</location>
    </subcellularLocation>
    <subcellularLocation>
        <location evidence="3">Endoplasmic reticulum</location>
    </subcellularLocation>
</comment>
<comment type="similarity">
    <text evidence="3">Belongs to the short-chain dehydrogenases/reductases (SDR) family.</text>
</comment>
<sequence length="317" mass="35737">MWLYLLALVGLWNLLRLFRERKVVSHLQDKYVFITGCDSGFGNLLARQLDRRGMRVLAACLTEKGAEQLRSKTSDRLETVILDVTKTESIVAATQWVKERVGNRGLWGLVNNAGISVPMGPNEWMRKKDFASVLDVNLLGVIEVTLNMLPLVRKARGRVVNIASTMGRMSLLGGGYCISKYGVEAFSDSLRRELTYFGVKVAIIEPGGFKTNVTNMERLSDNLKKLWDQATEEVKEIYGEKFRDSYMKAMESLVNMCSGDLSLVTDCMEHALTSCHPRTRYSAGWDAKFFYLPMSYLPTFLSDAVIYWGSVKPARAL</sequence>
<proteinExistence type="evidence at protein level"/>
<reference key="1">
    <citation type="journal article" date="1995" name="J. Biol. Chem.">
        <title>Cloning of a cDNA for liver microsomal retinol dehydrogenase. A tissue-specific, short-chain alcohol dehydrogenase.</title>
        <authorList>
            <person name="Chai X."/>
            <person name="Boerman M.H.E.M."/>
            <person name="Zhai Y."/>
            <person name="Napoli J.L."/>
        </authorList>
    </citation>
    <scope>NUCLEOTIDE SEQUENCE [MRNA]</scope>
    <scope>PARTIAL PROTEIN SEQUENCE</scope>
    <source>
        <strain>Sprague-Dawley</strain>
        <tissue>Liver</tissue>
    </source>
</reference>
<reference key="2">
    <citation type="journal article" date="1996" name="Gene">
        <title>Cloning of a rat cDNA encoding retinol dehydrogenase isozyme type III.</title>
        <authorList>
            <person name="Chai X."/>
            <person name="Zhai Y."/>
            <person name="Napoli J.L."/>
        </authorList>
    </citation>
    <scope>NUCLEOTIDE SEQUENCE [MRNA]</scope>
</reference>
<reference key="3">
    <citation type="journal article" date="2004" name="Genome Res.">
        <title>The status, quality, and expansion of the NIH full-length cDNA project: the Mammalian Gene Collection (MGC).</title>
        <authorList>
            <consortium name="The MGC Project Team"/>
        </authorList>
    </citation>
    <scope>NUCLEOTIDE SEQUENCE [LARGE SCALE MRNA]</scope>
    <source>
        <tissue>Liver</tissue>
        <tissue>Spleen</tissue>
    </source>
</reference>
<feature type="chain" id="PRO_0000054762" description="Retinol dehydrogenase 7">
    <location>
        <begin position="1"/>
        <end position="317"/>
    </location>
</feature>
<feature type="active site" description="Proton acceptor" evidence="2">
    <location>
        <position position="176"/>
    </location>
</feature>
<feature type="binding site" evidence="1">
    <location>
        <begin position="33"/>
        <end position="57"/>
    </location>
    <ligand>
        <name>NADP(+)</name>
        <dbReference type="ChEBI" id="CHEBI:58349"/>
    </ligand>
</feature>
<feature type="binding site" evidence="1">
    <location>
        <position position="164"/>
    </location>
    <ligand>
        <name>substrate</name>
    </ligand>
</feature>
<feature type="sequence conflict" description="In Ref. 1; AAB07997." evidence="3" ref="1">
    <original>M</original>
    <variation>V</variation>
    <location>
        <position position="119"/>
    </location>
</feature>
<feature type="sequence conflict" description="In Ref. 1; AAB07997." evidence="3" ref="1">
    <original>L</original>
    <variation>V</variation>
    <location>
        <position position="172"/>
    </location>
</feature>
<feature type="sequence conflict" description="In Ref. 1; AAB07997." evidence="3" ref="1">
    <original>A</original>
    <variation>T</variation>
    <location>
        <position position="230"/>
    </location>
</feature>
<feature type="sequence conflict" description="In Ref. 1; AAB07997." evidence="3" ref="1">
    <original>R</original>
    <variation>Q</variation>
    <location>
        <position position="243"/>
    </location>
</feature>
<feature type="sequence conflict" description="In Ref. 1; AAB07997." evidence="3" ref="1">
    <original>M</original>
    <variation>T</variation>
    <location>
        <position position="256"/>
    </location>
</feature>
<feature type="sequence conflict" description="In Ref. 1; AAB07997." evidence="3" ref="1">
    <original>A</original>
    <variation>P</variation>
    <location>
        <position position="283"/>
    </location>
</feature>
<feature type="sequence conflict" description="In Ref. 1; AAB07997." evidence="3" ref="1">
    <original>Y</original>
    <variation>H</variation>
    <location>
        <position position="307"/>
    </location>
</feature>
<keyword id="KW-0903">Direct protein sequencing</keyword>
<keyword id="KW-0256">Endoplasmic reticulum</keyword>
<keyword id="KW-0492">Microsome</keyword>
<keyword id="KW-0520">NAD</keyword>
<keyword id="KW-0521">NADP</keyword>
<keyword id="KW-0560">Oxidoreductase</keyword>
<keyword id="KW-1185">Reference proteome</keyword>
<dbReference type="EC" id="1.1.1.105"/>
<dbReference type="EMBL" id="U18762">
    <property type="protein sequence ID" value="AAB07997.1"/>
    <property type="molecule type" value="mRNA"/>
</dbReference>
<dbReference type="EMBL" id="U33501">
    <property type="protein sequence ID" value="AAB07995.1"/>
    <property type="molecule type" value="mRNA"/>
</dbReference>
<dbReference type="EMBL" id="BC088090">
    <property type="protein sequence ID" value="AAH88090.1"/>
    <property type="molecule type" value="mRNA"/>
</dbReference>
<dbReference type="EMBL" id="BC098650">
    <property type="protein sequence ID" value="AAH98650.1"/>
    <property type="molecule type" value="mRNA"/>
</dbReference>
<dbReference type="PIR" id="A55884">
    <property type="entry name" value="A55884"/>
</dbReference>
<dbReference type="RefSeq" id="NP_598227.3">
    <property type="nucleotide sequence ID" value="NM_133543.3"/>
</dbReference>
<dbReference type="SMR" id="P55006"/>
<dbReference type="FunCoup" id="P55006">
    <property type="interactions" value="45"/>
</dbReference>
<dbReference type="IntAct" id="P55006">
    <property type="interactions" value="2"/>
</dbReference>
<dbReference type="iPTMnet" id="P55006"/>
<dbReference type="PhosphoSitePlus" id="P55006"/>
<dbReference type="PaxDb" id="10116-ENSRNOP00000005875"/>
<dbReference type="Ensembl" id="ENSRNOT00000005875.8">
    <property type="protein sequence ID" value="ENSRNOP00000005875.7"/>
    <property type="gene ID" value="ENSRNOG00000004391.8"/>
</dbReference>
<dbReference type="GeneID" id="360420"/>
<dbReference type="KEGG" id="rno:360420"/>
<dbReference type="UCSC" id="RGD:631370">
    <property type="organism name" value="rat"/>
</dbReference>
<dbReference type="AGR" id="RGD:631370"/>
<dbReference type="CTD" id="54150"/>
<dbReference type="RGD" id="631370">
    <property type="gene designation" value="Rdh7"/>
</dbReference>
<dbReference type="eggNOG" id="KOG1610">
    <property type="taxonomic scope" value="Eukaryota"/>
</dbReference>
<dbReference type="GeneTree" id="ENSGT00940000154118"/>
<dbReference type="InParanoid" id="P55006"/>
<dbReference type="OMA" id="YSWPKPA"/>
<dbReference type="OrthoDB" id="5296at2759"/>
<dbReference type="PhylomeDB" id="P55006"/>
<dbReference type="TreeFam" id="TF325617"/>
<dbReference type="Reactome" id="R-RNO-5365859">
    <property type="pathway name" value="RA biosynthesis pathway"/>
</dbReference>
<dbReference type="UniPathway" id="UPA00912"/>
<dbReference type="PRO" id="PR:P55006"/>
<dbReference type="Proteomes" id="UP000002494">
    <property type="component" value="Chromosome 7"/>
</dbReference>
<dbReference type="GO" id="GO:0005783">
    <property type="term" value="C:endoplasmic reticulum"/>
    <property type="evidence" value="ECO:0007669"/>
    <property type="project" value="UniProtKB-SubCell"/>
</dbReference>
<dbReference type="GO" id="GO:0043231">
    <property type="term" value="C:intracellular membrane-bounded organelle"/>
    <property type="evidence" value="ECO:0000318"/>
    <property type="project" value="GO_Central"/>
</dbReference>
<dbReference type="GO" id="GO:0004745">
    <property type="term" value="F:all-trans-retinol dehydrogenase (NAD+) activity"/>
    <property type="evidence" value="ECO:0000318"/>
    <property type="project" value="GO_Central"/>
</dbReference>
<dbReference type="GO" id="GO:0042572">
    <property type="term" value="P:retinol metabolic process"/>
    <property type="evidence" value="ECO:0000318"/>
    <property type="project" value="GO_Central"/>
</dbReference>
<dbReference type="GO" id="GO:0008202">
    <property type="term" value="P:steroid metabolic process"/>
    <property type="evidence" value="ECO:0000318"/>
    <property type="project" value="GO_Central"/>
</dbReference>
<dbReference type="CDD" id="cd09805">
    <property type="entry name" value="type2_17beta_HSD-like_SDR_c"/>
    <property type="match status" value="1"/>
</dbReference>
<dbReference type="FunFam" id="3.40.50.720:FF:000074">
    <property type="entry name" value="Retinol dehydrogenase type 1"/>
    <property type="match status" value="1"/>
</dbReference>
<dbReference type="Gene3D" id="3.40.50.720">
    <property type="entry name" value="NAD(P)-binding Rossmann-like Domain"/>
    <property type="match status" value="1"/>
</dbReference>
<dbReference type="InterPro" id="IPR036291">
    <property type="entry name" value="NAD(P)-bd_dom_sf"/>
</dbReference>
<dbReference type="InterPro" id="IPR020904">
    <property type="entry name" value="Sc_DH/Rdtase_CS"/>
</dbReference>
<dbReference type="InterPro" id="IPR002347">
    <property type="entry name" value="SDR_fam"/>
</dbReference>
<dbReference type="PANTHER" id="PTHR43313:SF11">
    <property type="entry name" value="RETINOL DEHYDROGENASE 16"/>
    <property type="match status" value="1"/>
</dbReference>
<dbReference type="PANTHER" id="PTHR43313">
    <property type="entry name" value="SHORT-CHAIN DEHYDROGENASE/REDUCTASE FAMILY 9C"/>
    <property type="match status" value="1"/>
</dbReference>
<dbReference type="Pfam" id="PF00106">
    <property type="entry name" value="adh_short"/>
    <property type="match status" value="1"/>
</dbReference>
<dbReference type="PRINTS" id="PR00081">
    <property type="entry name" value="GDHRDH"/>
</dbReference>
<dbReference type="PRINTS" id="PR00080">
    <property type="entry name" value="SDRFAMILY"/>
</dbReference>
<dbReference type="SUPFAM" id="SSF51735">
    <property type="entry name" value="NAD(P)-binding Rossmann-fold domains"/>
    <property type="match status" value="1"/>
</dbReference>
<dbReference type="PROSITE" id="PS00061">
    <property type="entry name" value="ADH_SHORT"/>
    <property type="match status" value="1"/>
</dbReference>
<evidence type="ECO:0000250" key="1"/>
<evidence type="ECO:0000255" key="2">
    <source>
        <dbReference type="PROSITE-ProRule" id="PRU10001"/>
    </source>
</evidence>
<evidence type="ECO:0000305" key="3"/>
<evidence type="ECO:0000312" key="4">
    <source>
        <dbReference type="RGD" id="631370"/>
    </source>
</evidence>
<protein>
    <recommendedName>
        <fullName>Retinol dehydrogenase 7</fullName>
        <ecNumber>1.1.1.105</ecNumber>
    </recommendedName>
    <alternativeName>
        <fullName evidence="4">Retinol dehydrogenase 3</fullName>
    </alternativeName>
    <alternativeName>
        <fullName>Retinol dehydrogenase type III</fullName>
        <shortName>RODH III</shortName>
    </alternativeName>
</protein>
<accession>P55006</accession>
<accession>P50169</accession>
<accession>Q4KMB6</accession>